<dbReference type="EMBL" id="AC121199">
    <property type="status" value="NOT_ANNOTATED_CDS"/>
    <property type="molecule type" value="Genomic_DNA"/>
</dbReference>
<dbReference type="EMBL" id="BC168253">
    <property type="protein sequence ID" value="AAI68253.1"/>
    <property type="molecule type" value="mRNA"/>
</dbReference>
<dbReference type="RefSeq" id="NP_001124485.1">
    <property type="nucleotide sequence ID" value="NM_001131013.2"/>
</dbReference>
<dbReference type="SMR" id="B4F7F3"/>
<dbReference type="FunCoup" id="B4F7F3">
    <property type="interactions" value="982"/>
</dbReference>
<dbReference type="STRING" id="10116.ENSRNOP00000047113"/>
<dbReference type="iPTMnet" id="B4F7F3"/>
<dbReference type="PhosphoSitePlus" id="B4F7F3"/>
<dbReference type="SwissPalm" id="B4F7F3"/>
<dbReference type="jPOST" id="B4F7F3"/>
<dbReference type="PaxDb" id="10116-ENSRNOP00000047113"/>
<dbReference type="PeptideAtlas" id="B4F7F3"/>
<dbReference type="GeneID" id="303798"/>
<dbReference type="KEGG" id="rno:303798"/>
<dbReference type="AGR" id="RGD:1306655"/>
<dbReference type="CTD" id="421"/>
<dbReference type="RGD" id="1306655">
    <property type="gene designation" value="Arvcf"/>
</dbReference>
<dbReference type="VEuPathDB" id="HostDB:ENSRNOG00000001888"/>
<dbReference type="eggNOG" id="KOG1048">
    <property type="taxonomic scope" value="Eukaryota"/>
</dbReference>
<dbReference type="HOGENOM" id="CLU_009111_1_0_1"/>
<dbReference type="InParanoid" id="B4F7F3"/>
<dbReference type="OrthoDB" id="3245100at2759"/>
<dbReference type="TreeFam" id="TF321877"/>
<dbReference type="PRO" id="PR:B4F7F3"/>
<dbReference type="Proteomes" id="UP000002494">
    <property type="component" value="Chromosome 11"/>
</dbReference>
<dbReference type="Bgee" id="ENSRNOG00000001888">
    <property type="expression patterns" value="Expressed in pancreas and 19 other cell types or tissues"/>
</dbReference>
<dbReference type="GO" id="GO:0005912">
    <property type="term" value="C:adherens junction"/>
    <property type="evidence" value="ECO:0000250"/>
    <property type="project" value="UniProtKB"/>
</dbReference>
<dbReference type="GO" id="GO:0005737">
    <property type="term" value="C:cytoplasm"/>
    <property type="evidence" value="ECO:0000250"/>
    <property type="project" value="UniProtKB"/>
</dbReference>
<dbReference type="GO" id="GO:0005634">
    <property type="term" value="C:nucleus"/>
    <property type="evidence" value="ECO:0000250"/>
    <property type="project" value="UniProtKB"/>
</dbReference>
<dbReference type="GO" id="GO:0005886">
    <property type="term" value="C:plasma membrane"/>
    <property type="evidence" value="ECO:0000266"/>
    <property type="project" value="RGD"/>
</dbReference>
<dbReference type="GO" id="GO:0045296">
    <property type="term" value="F:cadherin binding"/>
    <property type="evidence" value="ECO:0000250"/>
    <property type="project" value="UniProtKB"/>
</dbReference>
<dbReference type="GO" id="GO:0098609">
    <property type="term" value="P:cell-cell adhesion"/>
    <property type="evidence" value="ECO:0000318"/>
    <property type="project" value="GO_Central"/>
</dbReference>
<dbReference type="GO" id="GO:0006397">
    <property type="term" value="P:mRNA processing"/>
    <property type="evidence" value="ECO:0007669"/>
    <property type="project" value="UniProtKB-KW"/>
</dbReference>
<dbReference type="GO" id="GO:0008380">
    <property type="term" value="P:RNA splicing"/>
    <property type="evidence" value="ECO:0000250"/>
    <property type="project" value="UniProtKB"/>
</dbReference>
<dbReference type="FunFam" id="1.25.10.10:FF:000007">
    <property type="entry name" value="ARVCF, delta catenin family member"/>
    <property type="match status" value="1"/>
</dbReference>
<dbReference type="Gene3D" id="1.25.10.10">
    <property type="entry name" value="Leucine-rich Repeat Variant"/>
    <property type="match status" value="1"/>
</dbReference>
<dbReference type="InterPro" id="IPR011989">
    <property type="entry name" value="ARM-like"/>
</dbReference>
<dbReference type="InterPro" id="IPR016024">
    <property type="entry name" value="ARM-type_fold"/>
</dbReference>
<dbReference type="InterPro" id="IPR000225">
    <property type="entry name" value="Armadillo"/>
</dbReference>
<dbReference type="InterPro" id="IPR028435">
    <property type="entry name" value="Plakophilin/d_Catenin"/>
</dbReference>
<dbReference type="PANTHER" id="PTHR10372">
    <property type="entry name" value="PLAKOPHILLIN-RELATED"/>
    <property type="match status" value="1"/>
</dbReference>
<dbReference type="PANTHER" id="PTHR10372:SF5">
    <property type="entry name" value="SPLICING REGULATOR ARVCF"/>
    <property type="match status" value="1"/>
</dbReference>
<dbReference type="Pfam" id="PF00514">
    <property type="entry name" value="Arm"/>
    <property type="match status" value="4"/>
</dbReference>
<dbReference type="SMART" id="SM00185">
    <property type="entry name" value="ARM"/>
    <property type="match status" value="6"/>
</dbReference>
<dbReference type="SUPFAM" id="SSF48371">
    <property type="entry name" value="ARM repeat"/>
    <property type="match status" value="1"/>
</dbReference>
<dbReference type="PROSITE" id="PS50176">
    <property type="entry name" value="ARM_REPEAT"/>
    <property type="match status" value="3"/>
</dbReference>
<feature type="chain" id="PRO_0000455122" description="Splicing regulator ARVCF">
    <location>
        <begin position="1"/>
        <end position="973"/>
    </location>
</feature>
<feature type="repeat" description="ARM 1" evidence="2">
    <location>
        <begin position="349"/>
        <end position="388"/>
    </location>
</feature>
<feature type="repeat" description="ARM 2" evidence="2">
    <location>
        <begin position="391"/>
        <end position="430"/>
    </location>
</feature>
<feature type="repeat" description="ARM 3" evidence="2">
    <location>
        <begin position="434"/>
        <end position="468"/>
    </location>
</feature>
<feature type="repeat" description="ARM 4" evidence="2">
    <location>
        <begin position="469"/>
        <end position="509"/>
    </location>
</feature>
<feature type="repeat" description="ARM 5" evidence="2">
    <location>
        <begin position="527"/>
        <end position="566"/>
    </location>
</feature>
<feature type="repeat" description="ARM 6" evidence="2">
    <location>
        <begin position="576"/>
        <end position="623"/>
    </location>
</feature>
<feature type="repeat" description="ARM 7" evidence="2">
    <location>
        <begin position="641"/>
        <end position="681"/>
    </location>
</feature>
<feature type="repeat" description="ARM 8" evidence="2">
    <location>
        <begin position="694"/>
        <end position="733"/>
    </location>
</feature>
<feature type="repeat" description="ARM 9" evidence="2">
    <location>
        <begin position="734"/>
        <end position="776"/>
    </location>
</feature>
<feature type="repeat" description="ARM 10" evidence="2">
    <location>
        <begin position="777"/>
        <end position="821"/>
    </location>
</feature>
<feature type="region of interest" description="Disordered" evidence="4">
    <location>
        <begin position="95"/>
        <end position="123"/>
    </location>
</feature>
<feature type="region of interest" description="Disordered" evidence="4">
    <location>
        <begin position="233"/>
        <end position="254"/>
    </location>
</feature>
<feature type="region of interest" description="Disordered" evidence="4">
    <location>
        <begin position="267"/>
        <end position="331"/>
    </location>
</feature>
<feature type="region of interest" description="Disordered" evidence="4">
    <location>
        <begin position="593"/>
        <end position="623"/>
    </location>
</feature>
<feature type="region of interest" description="Required for interaction with RNA-binding proteins DDX5, HNRNPH2 and SRSF1 and with mRNAs" evidence="1">
    <location>
        <begin position="771"/>
        <end position="955"/>
    </location>
</feature>
<feature type="region of interest" description="Disordered" evidence="4">
    <location>
        <begin position="844"/>
        <end position="926"/>
    </location>
</feature>
<feature type="short sequence motif" description="Nuclear localization signal" evidence="3">
    <location>
        <begin position="608"/>
        <end position="624"/>
    </location>
</feature>
<feature type="compositionally biased region" description="Polar residues" evidence="4">
    <location>
        <begin position="103"/>
        <end position="115"/>
    </location>
</feature>
<feature type="compositionally biased region" description="Acidic residues" evidence="4">
    <location>
        <begin position="271"/>
        <end position="281"/>
    </location>
</feature>
<feature type="compositionally biased region" description="Basic and acidic residues" evidence="4">
    <location>
        <begin position="289"/>
        <end position="303"/>
    </location>
</feature>
<feature type="compositionally biased region" description="Basic and acidic residues" evidence="4">
    <location>
        <begin position="872"/>
        <end position="881"/>
    </location>
</feature>
<feature type="modified residue" description="Phosphothreonine" evidence="1">
    <location>
        <position position="103"/>
    </location>
</feature>
<feature type="modified residue" description="Phosphothreonine" evidence="1">
    <location>
        <position position="105"/>
    </location>
</feature>
<feature type="modified residue" description="Omega-N-methylarginine" evidence="2">
    <location>
        <position position="171"/>
    </location>
</feature>
<feature type="modified residue" description="Phosphoserine" evidence="2">
    <location>
        <position position="268"/>
    </location>
</feature>
<feature type="modified residue" description="Phosphoserine" evidence="2">
    <location>
        <position position="333"/>
    </location>
</feature>
<feature type="modified residue" description="Phosphoserine" evidence="2">
    <location>
        <position position="336"/>
    </location>
</feature>
<feature type="modified residue" description="Phosphoserine" evidence="1">
    <location>
        <position position="344"/>
    </location>
</feature>
<feature type="modified residue" description="Phosphoserine" evidence="1">
    <location>
        <position position="346"/>
    </location>
</feature>
<feature type="modified residue" description="Phosphoserine" evidence="1">
    <location>
        <position position="607"/>
    </location>
</feature>
<feature type="modified residue" description="Phosphothreonine" evidence="2">
    <location>
        <position position="637"/>
    </location>
</feature>
<feature type="modified residue" description="Phosphoserine" evidence="1">
    <location>
        <position position="865"/>
    </location>
</feature>
<feature type="modified residue" description="Phosphothreonine" evidence="1">
    <location>
        <position position="866"/>
    </location>
</feature>
<name>ARVC_RAT</name>
<keyword id="KW-0130">Cell adhesion</keyword>
<keyword id="KW-0965">Cell junction</keyword>
<keyword id="KW-0963">Cytoplasm</keyword>
<keyword id="KW-0488">Methylation</keyword>
<keyword id="KW-0507">mRNA processing</keyword>
<keyword id="KW-0508">mRNA splicing</keyword>
<keyword id="KW-0539">Nucleus</keyword>
<keyword id="KW-0597">Phosphoprotein</keyword>
<keyword id="KW-1185">Reference proteome</keyword>
<keyword id="KW-0677">Repeat</keyword>
<reference key="1">
    <citation type="journal article" date="2004" name="Nature">
        <title>Genome sequence of the Brown Norway rat yields insights into mammalian evolution.</title>
        <authorList>
            <person name="Gibbs R.A."/>
            <person name="Weinstock G.M."/>
            <person name="Metzker M.L."/>
            <person name="Muzny D.M."/>
            <person name="Sodergren E.J."/>
            <person name="Scherer S."/>
            <person name="Scott G."/>
            <person name="Steffen D."/>
            <person name="Worley K.C."/>
            <person name="Burch P.E."/>
            <person name="Okwuonu G."/>
            <person name="Hines S."/>
            <person name="Lewis L."/>
            <person name="Deramo C."/>
            <person name="Delgado O."/>
            <person name="Dugan-Rocha S."/>
            <person name="Miner G."/>
            <person name="Morgan M."/>
            <person name="Hawes A."/>
            <person name="Gill R."/>
            <person name="Holt R.A."/>
            <person name="Adams M.D."/>
            <person name="Amanatides P.G."/>
            <person name="Baden-Tillson H."/>
            <person name="Barnstead M."/>
            <person name="Chin S."/>
            <person name="Evans C.A."/>
            <person name="Ferriera S."/>
            <person name="Fosler C."/>
            <person name="Glodek A."/>
            <person name="Gu Z."/>
            <person name="Jennings D."/>
            <person name="Kraft C.L."/>
            <person name="Nguyen T."/>
            <person name="Pfannkoch C.M."/>
            <person name="Sitter C."/>
            <person name="Sutton G.G."/>
            <person name="Venter J.C."/>
            <person name="Woodage T."/>
            <person name="Smith D."/>
            <person name="Lee H.-M."/>
            <person name="Gustafson E."/>
            <person name="Cahill P."/>
            <person name="Kana A."/>
            <person name="Doucette-Stamm L."/>
            <person name="Weinstock K."/>
            <person name="Fechtel K."/>
            <person name="Weiss R.B."/>
            <person name="Dunn D.M."/>
            <person name="Green E.D."/>
            <person name="Blakesley R.W."/>
            <person name="Bouffard G.G."/>
            <person name="De Jong P.J."/>
            <person name="Osoegawa K."/>
            <person name="Zhu B."/>
            <person name="Marra M."/>
            <person name="Schein J."/>
            <person name="Bosdet I."/>
            <person name="Fjell C."/>
            <person name="Jones S."/>
            <person name="Krzywinski M."/>
            <person name="Mathewson C."/>
            <person name="Siddiqui A."/>
            <person name="Wye N."/>
            <person name="McPherson J."/>
            <person name="Zhao S."/>
            <person name="Fraser C.M."/>
            <person name="Shetty J."/>
            <person name="Shatsman S."/>
            <person name="Geer K."/>
            <person name="Chen Y."/>
            <person name="Abramzon S."/>
            <person name="Nierman W.C."/>
            <person name="Havlak P.H."/>
            <person name="Chen R."/>
            <person name="Durbin K.J."/>
            <person name="Egan A."/>
            <person name="Ren Y."/>
            <person name="Song X.-Z."/>
            <person name="Li B."/>
            <person name="Liu Y."/>
            <person name="Qin X."/>
            <person name="Cawley S."/>
            <person name="Cooney A.J."/>
            <person name="D'Souza L.M."/>
            <person name="Martin K."/>
            <person name="Wu J.Q."/>
            <person name="Gonzalez-Garay M.L."/>
            <person name="Jackson A.R."/>
            <person name="Kalafus K.J."/>
            <person name="McLeod M.P."/>
            <person name="Milosavljevic A."/>
            <person name="Virk D."/>
            <person name="Volkov A."/>
            <person name="Wheeler D.A."/>
            <person name="Zhang Z."/>
            <person name="Bailey J.A."/>
            <person name="Eichler E.E."/>
            <person name="Tuzun E."/>
            <person name="Birney E."/>
            <person name="Mongin E."/>
            <person name="Ureta-Vidal A."/>
            <person name="Woodwark C."/>
            <person name="Zdobnov E."/>
            <person name="Bork P."/>
            <person name="Suyama M."/>
            <person name="Torrents D."/>
            <person name="Alexandersson M."/>
            <person name="Trask B.J."/>
            <person name="Young J.M."/>
            <person name="Huang H."/>
            <person name="Wang H."/>
            <person name="Xing H."/>
            <person name="Daniels S."/>
            <person name="Gietzen D."/>
            <person name="Schmidt J."/>
            <person name="Stevens K."/>
            <person name="Vitt U."/>
            <person name="Wingrove J."/>
            <person name="Camara F."/>
            <person name="Mar Alba M."/>
            <person name="Abril J.F."/>
            <person name="Guigo R."/>
            <person name="Smit A."/>
            <person name="Dubchak I."/>
            <person name="Rubin E.M."/>
            <person name="Couronne O."/>
            <person name="Poliakov A."/>
            <person name="Huebner N."/>
            <person name="Ganten D."/>
            <person name="Goesele C."/>
            <person name="Hummel O."/>
            <person name="Kreitler T."/>
            <person name="Lee Y.-A."/>
            <person name="Monti J."/>
            <person name="Schulz H."/>
            <person name="Zimdahl H."/>
            <person name="Himmelbauer H."/>
            <person name="Lehrach H."/>
            <person name="Jacob H.J."/>
            <person name="Bromberg S."/>
            <person name="Gullings-Handley J."/>
            <person name="Jensen-Seaman M.I."/>
            <person name="Kwitek A.E."/>
            <person name="Lazar J."/>
            <person name="Pasko D."/>
            <person name="Tonellato P.J."/>
            <person name="Twigger S."/>
            <person name="Ponting C.P."/>
            <person name="Duarte J.M."/>
            <person name="Rice S."/>
            <person name="Goodstadt L."/>
            <person name="Beatson S.A."/>
            <person name="Emes R.D."/>
            <person name="Winter E.E."/>
            <person name="Webber C."/>
            <person name="Brandt P."/>
            <person name="Nyakatura G."/>
            <person name="Adetobi M."/>
            <person name="Chiaromonte F."/>
            <person name="Elnitski L."/>
            <person name="Eswara P."/>
            <person name="Hardison R.C."/>
            <person name="Hou M."/>
            <person name="Kolbe D."/>
            <person name="Makova K."/>
            <person name="Miller W."/>
            <person name="Nekrutenko A."/>
            <person name="Riemer C."/>
            <person name="Schwartz S."/>
            <person name="Taylor J."/>
            <person name="Yang S."/>
            <person name="Zhang Y."/>
            <person name="Lindpaintner K."/>
            <person name="Andrews T.D."/>
            <person name="Caccamo M."/>
            <person name="Clamp M."/>
            <person name="Clarke L."/>
            <person name="Curwen V."/>
            <person name="Durbin R.M."/>
            <person name="Eyras E."/>
            <person name="Searle S.M."/>
            <person name="Cooper G.M."/>
            <person name="Batzoglou S."/>
            <person name="Brudno M."/>
            <person name="Sidow A."/>
            <person name="Stone E.A."/>
            <person name="Payseur B.A."/>
            <person name="Bourque G."/>
            <person name="Lopez-Otin C."/>
            <person name="Puente X.S."/>
            <person name="Chakrabarti K."/>
            <person name="Chatterji S."/>
            <person name="Dewey C."/>
            <person name="Pachter L."/>
            <person name="Bray N."/>
            <person name="Yap V.B."/>
            <person name="Caspi A."/>
            <person name="Tesler G."/>
            <person name="Pevzner P.A."/>
            <person name="Haussler D."/>
            <person name="Roskin K.M."/>
            <person name="Baertsch R."/>
            <person name="Clawson H."/>
            <person name="Furey T.S."/>
            <person name="Hinrichs A.S."/>
            <person name="Karolchik D."/>
            <person name="Kent W.J."/>
            <person name="Rosenbloom K.R."/>
            <person name="Trumbower H."/>
            <person name="Weirauch M."/>
            <person name="Cooper D.N."/>
            <person name="Stenson P.D."/>
            <person name="Ma B."/>
            <person name="Brent M."/>
            <person name="Arumugam M."/>
            <person name="Shteynberg D."/>
            <person name="Copley R.R."/>
            <person name="Taylor M.S."/>
            <person name="Riethman H."/>
            <person name="Mudunuri U."/>
            <person name="Peterson J."/>
            <person name="Guyer M."/>
            <person name="Felsenfeld A."/>
            <person name="Old S."/>
            <person name="Mockrin S."/>
            <person name="Collins F.S."/>
        </authorList>
    </citation>
    <scope>NUCLEOTIDE SEQUENCE [LARGE SCALE GENOMIC DNA]</scope>
    <source>
        <strain>Brown Norway</strain>
    </source>
</reference>
<reference key="2">
    <citation type="journal article" date="2004" name="Genome Res.">
        <title>The status, quality, and expansion of the NIH full-length cDNA project: the Mammalian Gene Collection (MGC).</title>
        <authorList>
            <consortium name="The MGC Project Team"/>
        </authorList>
    </citation>
    <scope>NUCLEOTIDE SEQUENCE [LARGE SCALE MRNA]</scope>
    <source>
        <tissue evidence="8">Prostate</tissue>
    </source>
</reference>
<reference evidence="10" key="3">
    <citation type="journal article" date="2012" name="Nat. Commun.">
        <title>Quantitative maps of protein phosphorylation sites across 14 different rat organs and tissues.</title>
        <authorList>
            <person name="Lundby A."/>
            <person name="Secher A."/>
            <person name="Lage K."/>
            <person name="Nordsborg N.B."/>
            <person name="Dmytriyev A."/>
            <person name="Lundby C."/>
            <person name="Olsen J.V."/>
        </authorList>
    </citation>
    <scope>IDENTIFICATION BY MASS SPECTROMETRY [LARGE SCALE ANALYSIS]</scope>
</reference>
<reference key="4">
    <citation type="journal article" date="2018" name="Dermatol. Pract. Concept.">
        <title>Patients affected by endemic pemphigus foliaceus in Colombia, South America exhibit autoantibodies to optic nerve sheath envelope cell junctions.</title>
        <authorList>
            <person name="Abreu-Velez A.M."/>
            <person name="Gao W."/>
            <person name="Howard M.S."/>
        </authorList>
    </citation>
    <scope>TISSUE SPECIFICITY</scope>
</reference>
<reference key="5">
    <citation type="journal article" date="2019" name="Dermatol. Pract. Concept.">
        <title>Involvement of the Areae Compositae of the Heart in Endemic Pemphigus Foliaceus.</title>
        <authorList>
            <person name="Abreu-Velez A.M."/>
            <person name="Upegui-Zapata Y.A."/>
            <person name="Valencia-Yepes C.A."/>
            <person name="Upegui-Quiceno E."/>
            <person name="Jimenez-Echavarria A.M."/>
            <person name="Nino-Pulido C.D."/>
            <person name="Smoller B.R."/>
            <person name="Howard M.S."/>
        </authorList>
    </citation>
    <scope>TISSUE SPECIFICITY</scope>
    <scope>SUBCELLULAR LOCATION</scope>
</reference>
<accession>B4F7F3</accession>
<gene>
    <name evidence="9" type="primary">Arvcf</name>
</gene>
<protein>
    <recommendedName>
        <fullName evidence="7">Splicing regulator ARVCF</fullName>
    </recommendedName>
    <alternativeName>
        <fullName evidence="7">Armadillo repeat protein deleted in velo-cardio-facial syndrome homolog</fullName>
    </alternativeName>
</protein>
<organism evidence="8">
    <name type="scientific">Rattus norvegicus</name>
    <name type="common">Rat</name>
    <dbReference type="NCBI Taxonomy" id="10116"/>
    <lineage>
        <taxon>Eukaryota</taxon>
        <taxon>Metazoa</taxon>
        <taxon>Chordata</taxon>
        <taxon>Craniata</taxon>
        <taxon>Vertebrata</taxon>
        <taxon>Euteleostomi</taxon>
        <taxon>Mammalia</taxon>
        <taxon>Eutheria</taxon>
        <taxon>Euarchontoglires</taxon>
        <taxon>Glires</taxon>
        <taxon>Rodentia</taxon>
        <taxon>Myomorpha</taxon>
        <taxon>Muroidea</taxon>
        <taxon>Muridae</taxon>
        <taxon>Murinae</taxon>
        <taxon>Rattus</taxon>
    </lineage>
</organism>
<sequence length="973" mass="105487">MEDCNVHSAASILASVKEQEARFERLTRALEQERRHVALQLERAQQPGMSSGGMVGSGQPLPMAWQQLVLQEQSPGSQASLATMPEAPEVLEETVTVEEDPGTPTSHVSIVTSEDGTTRRTETKVTKTVKTVTTRTVRQVPLGPDGLPLLDGGPPLGSFADGPLDRHYVLRGGGPAATLSRAYLSSGGGFPDGPEPRDIPSYGSLSRGLGVRPPRTGLLGPGPGDGCFTLPGRREAFPMGSESGPPSGRSLPEHFQAEPYGLEDDTRSLAADDEGGPDLEPDYSTATRRRPEYGRGLRARALEDTADDTGELVEERPPFPAATAPLAQPERGSLGSLDRVVRRSPSVDSTRKEPRWRDPELPEVLAMLRHPVDPVKANAAAYLQHLCFENEGIKRRVRQLRGLPLLVALLDHPRAEVRRRACGALRNLSYGRDADNKAAIRDCGGVPALVRLLRAARDNEVRELVTGTLWNLSSYEPLKMVIIDHGLQTLTHEVIVPHSGWEREPNEDSKPRDAEWTTVFKNTSGCLRNVSSDGAEARRRLRECEGLVDALLHALQSAVGRKDTDNKSVENCVCIMRNLSYHVHKEVPGADRYQEVEPGIPGSAATSQRRRKDDASCFGGKKAKGKKDAEADRNFDTLDLPKRTEAAKGFELLYQPEVVRLYLSLLTESRNFNTLEAAAGALQNLSAGNWMWATYIRATVRKERGLPVLVELLQSETDKVVRAVAIALRNLSLDQRNKDLIGSYAMTELVRNVRNAQAPAHPSAHLEEDTVVAVLNTIHEIVSDSLDNARSLLQARGVPALVALVASSQSVREAKAASHVLQTVWSYKELRGALQRDGWTKAHFQSASTAKGPKGTPNSGGFDDSTLPLVDKNLDGEKSTTRDVIPMDTLGPDGYSTVDRRERRTLGSDSIGDSSEKELLKGPGPAVCSSDHMEVIGRGPSGTDPVLGPGAPPFCVGLAKPLVYLALPSSLLS</sequence>
<comment type="function">
    <text evidence="1">Contributes to the regulation of alternative splicing of pre-mRNAs.</text>
</comment>
<comment type="subunit">
    <text evidence="1">Component of a ribonucleoprotein complex containing mRNAs and RNA-binding proteins including DDX5, HNRNPH2 and SRSF1 as well as ARVCF (By similarity). Interacts (via the extreme C-terminus) with FRMPD2 (via the PDZ 2 domain). Interacts with CCDC85B (By similarity).</text>
</comment>
<comment type="subcellular location">
    <subcellularLocation>
        <location evidence="1">Cell junction</location>
        <location evidence="1">Adherens junction</location>
    </subcellularLocation>
    <subcellularLocation>
        <location evidence="1">Nucleus</location>
    </subcellularLocation>
    <subcellularLocation>
        <location evidence="1">Cytoplasm</location>
    </subcellularLocation>
    <text evidence="6">In heart, localizes at area composita, the mixed-type junctional structure composed of both desmosomal and adherens junctional proteins.</text>
</comment>
<comment type="tissue specificity">
    <text evidence="5 6">Expressed in optic nerve sheath envelope (at protein level) (PubMed:29445566). Expressed in heart (at protein level) (PubMed:31384490).</text>
</comment>
<comment type="similarity">
    <text evidence="7">Belongs to the beta-catenin family.</text>
</comment>
<proteinExistence type="evidence at protein level"/>
<evidence type="ECO:0000250" key="1">
    <source>
        <dbReference type="UniProtKB" id="O00192"/>
    </source>
</evidence>
<evidence type="ECO:0000250" key="2">
    <source>
        <dbReference type="UniProtKB" id="P98203"/>
    </source>
</evidence>
<evidence type="ECO:0000255" key="3"/>
<evidence type="ECO:0000256" key="4">
    <source>
        <dbReference type="SAM" id="MobiDB-lite"/>
    </source>
</evidence>
<evidence type="ECO:0000269" key="5">
    <source>
    </source>
</evidence>
<evidence type="ECO:0000269" key="6">
    <source>
    </source>
</evidence>
<evidence type="ECO:0000305" key="7"/>
<evidence type="ECO:0000312" key="8">
    <source>
        <dbReference type="EMBL" id="AAI68253.1"/>
    </source>
</evidence>
<evidence type="ECO:0000312" key="9">
    <source>
        <dbReference type="RGD" id="1306655"/>
    </source>
</evidence>
<evidence type="ECO:0007744" key="10">
    <source>
    </source>
</evidence>